<evidence type="ECO:0000250" key="1">
    <source>
        <dbReference type="UniProtKB" id="Q80ZG1"/>
    </source>
</evidence>
<evidence type="ECO:0000256" key="2">
    <source>
        <dbReference type="SAM" id="MobiDB-lite"/>
    </source>
</evidence>
<evidence type="ECO:0000305" key="3"/>
<keyword id="KW-0143">Chaperone</keyword>
<keyword id="KW-0963">Cytoplasm</keyword>
<keyword id="KW-0344">Guanine-nucleotide releasing factor</keyword>
<keyword id="KW-1185">Reference proteome</keyword>
<sequence>MELRTVVATVESGEQDAVLKVLQIYNQEKSQCFTFDDEEREERKKMAQLLIKFLERELQPSCQVTCLESIRILSRDKYCLEPFTTEEGLKTLSRHAGIDYSEELIREVPDLEVILESLKCLCNIVFSSPRAQELTAEARLVVGLTKRIKLYNERSLPHEVKFFDLRLLFLLTALRVDIRQQLAQELRGISLMTDTLELTLGVKWMDPYEVATEEGLLPPLPRQETERAMEILKVLFNITFDSSKREVDEEDAALYRHLGALLRHCLMISADGEDRTEEFHSHTVNLLGNLPLKCLDVLLTPKVRPGSLEYMGVNMDAVNILLDFLERRLDRGHKLKESLTPVLNLLTESARVHRQTRKFLKAKVLPPLRDVKNRPEVGNSLRNKLVRLMTHIDTDVKHCAAEFLFVLCKESVSRFVKYTGYGNAAGLLAARGLMAGGREEGEYSEDEDTDTEEYKEAKPNINPVTGRVEEKLPNPMEGMTEEQKEYEAMKLVNMFDKLSREQVIQPMGITPSGNLAPMENAIRDMADERSSSDSDLGLD</sequence>
<accession>Q5ZL77</accession>
<name>RIC8A_CHICK</name>
<protein>
    <recommendedName>
        <fullName>Chaperone Ric-8A</fullName>
    </recommendedName>
    <alternativeName>
        <fullName>Synembryn-A</fullName>
    </alternativeName>
</protein>
<feature type="chain" id="PRO_0000235895" description="Chaperone Ric-8A">
    <location>
        <begin position="1"/>
        <end position="539"/>
    </location>
</feature>
<feature type="region of interest" description="Disordered" evidence="2">
    <location>
        <begin position="507"/>
        <end position="539"/>
    </location>
</feature>
<feature type="compositionally biased region" description="Basic and acidic residues" evidence="2">
    <location>
        <begin position="521"/>
        <end position="532"/>
    </location>
</feature>
<gene>
    <name type="primary">RIC8A</name>
    <name type="ORF">RCJMB04_7f5</name>
</gene>
<comment type="function">
    <text evidence="1">Chaperone that specifically binds and folds nascent G alpha proteins prior to G protein heterotrimer formation, promoting their stability and activity: folds GNAI1, GNAO1, GNA13 and GNAQ. Does not fold G(s) G-alpha proteins GNAS nor GNAL. Also acts as a guanine nucleotide exchange factor (GEF) for G alpha proteins by stimulating exchange of bound GDP for free GTP.</text>
</comment>
<comment type="subcellular location">
    <subcellularLocation>
        <location evidence="1">Cytoplasm</location>
        <location evidence="1">Cell cortex</location>
    </subcellularLocation>
    <subcellularLocation>
        <location evidence="1">Cytoplasm</location>
    </subcellularLocation>
</comment>
<comment type="similarity">
    <text evidence="3">Belongs to the synembryn family.</text>
</comment>
<proteinExistence type="evidence at transcript level"/>
<reference key="1">
    <citation type="journal article" date="2005" name="Genome Biol.">
        <title>Full-length cDNAs from chicken bursal lymphocytes to facilitate gene function analysis.</title>
        <authorList>
            <person name="Caldwell R.B."/>
            <person name="Kierzek A.M."/>
            <person name="Arakawa H."/>
            <person name="Bezzubov Y."/>
            <person name="Zaim J."/>
            <person name="Fiedler P."/>
            <person name="Kutter S."/>
            <person name="Blagodatski A."/>
            <person name="Kostovska D."/>
            <person name="Koter M."/>
            <person name="Plachy J."/>
            <person name="Carninci P."/>
            <person name="Hayashizaki Y."/>
            <person name="Buerstedde J.-M."/>
        </authorList>
    </citation>
    <scope>NUCLEOTIDE SEQUENCE [LARGE SCALE MRNA]</scope>
    <source>
        <strain>CB</strain>
        <tissue>Bursa of Fabricius</tissue>
    </source>
</reference>
<organism>
    <name type="scientific">Gallus gallus</name>
    <name type="common">Chicken</name>
    <dbReference type="NCBI Taxonomy" id="9031"/>
    <lineage>
        <taxon>Eukaryota</taxon>
        <taxon>Metazoa</taxon>
        <taxon>Chordata</taxon>
        <taxon>Craniata</taxon>
        <taxon>Vertebrata</taxon>
        <taxon>Euteleostomi</taxon>
        <taxon>Archelosauria</taxon>
        <taxon>Archosauria</taxon>
        <taxon>Dinosauria</taxon>
        <taxon>Saurischia</taxon>
        <taxon>Theropoda</taxon>
        <taxon>Coelurosauria</taxon>
        <taxon>Aves</taxon>
        <taxon>Neognathae</taxon>
        <taxon>Galloanserae</taxon>
        <taxon>Galliformes</taxon>
        <taxon>Phasianidae</taxon>
        <taxon>Phasianinae</taxon>
        <taxon>Gallus</taxon>
    </lineage>
</organism>
<dbReference type="EMBL" id="AJ719857">
    <property type="protein sequence ID" value="CAG31516.1"/>
    <property type="molecule type" value="mRNA"/>
</dbReference>
<dbReference type="RefSeq" id="NP_001026345.1">
    <property type="nucleotide sequence ID" value="NM_001031174.2"/>
</dbReference>
<dbReference type="RefSeq" id="XP_015141685.1">
    <property type="nucleotide sequence ID" value="XM_015286199.4"/>
</dbReference>
<dbReference type="RefSeq" id="XP_025006417.1">
    <property type="nucleotide sequence ID" value="XM_025150649.3"/>
</dbReference>
<dbReference type="RefSeq" id="XP_040556718.1">
    <property type="nucleotide sequence ID" value="XM_040700784.2"/>
</dbReference>
<dbReference type="RefSeq" id="XP_046774019.1">
    <property type="nucleotide sequence ID" value="XM_046918063.1"/>
</dbReference>
<dbReference type="RefSeq" id="XP_046774020.1">
    <property type="nucleotide sequence ID" value="XM_046918064.1"/>
</dbReference>
<dbReference type="RefSeq" id="XP_046774021.1">
    <property type="nucleotide sequence ID" value="XM_046918065.1"/>
</dbReference>
<dbReference type="SMR" id="Q5ZL77"/>
<dbReference type="FunCoup" id="Q5ZL77">
    <property type="interactions" value="1937"/>
</dbReference>
<dbReference type="STRING" id="9031.ENSGALP00000071454"/>
<dbReference type="PaxDb" id="9031-ENSGALP00000006648"/>
<dbReference type="GeneID" id="422987"/>
<dbReference type="KEGG" id="gga:422987"/>
<dbReference type="CTD" id="60626"/>
<dbReference type="VEuPathDB" id="HostDB:geneid_422987"/>
<dbReference type="eggNOG" id="KOG4464">
    <property type="taxonomic scope" value="Eukaryota"/>
</dbReference>
<dbReference type="HOGENOM" id="CLU_018602_1_0_1"/>
<dbReference type="InParanoid" id="Q5ZL77"/>
<dbReference type="OMA" id="NADPIFT"/>
<dbReference type="OrthoDB" id="5585685at2759"/>
<dbReference type="PhylomeDB" id="Q5ZL77"/>
<dbReference type="PRO" id="PR:Q5ZL77"/>
<dbReference type="Proteomes" id="UP000000539">
    <property type="component" value="Chromosome 5"/>
</dbReference>
<dbReference type="Bgee" id="ENSGALG00000004191">
    <property type="expression patterns" value="Expressed in brain and 13 other cell types or tissues"/>
</dbReference>
<dbReference type="GO" id="GO:0005938">
    <property type="term" value="C:cell cortex"/>
    <property type="evidence" value="ECO:0007669"/>
    <property type="project" value="UniProtKB-SubCell"/>
</dbReference>
<dbReference type="GO" id="GO:0005737">
    <property type="term" value="C:cytoplasm"/>
    <property type="evidence" value="ECO:0000250"/>
    <property type="project" value="UniProtKB"/>
</dbReference>
<dbReference type="GO" id="GO:0005886">
    <property type="term" value="C:plasma membrane"/>
    <property type="evidence" value="ECO:0000250"/>
    <property type="project" value="UniProtKB"/>
</dbReference>
<dbReference type="GO" id="GO:0001965">
    <property type="term" value="F:G-protein alpha-subunit binding"/>
    <property type="evidence" value="ECO:0000250"/>
    <property type="project" value="UniProtKB"/>
</dbReference>
<dbReference type="GO" id="GO:0005085">
    <property type="term" value="F:guanyl-nucleotide exchange factor activity"/>
    <property type="evidence" value="ECO:0000250"/>
    <property type="project" value="UniProtKB"/>
</dbReference>
<dbReference type="GO" id="GO:0044183">
    <property type="term" value="F:protein folding chaperone"/>
    <property type="evidence" value="ECO:0000250"/>
    <property type="project" value="UniProtKB"/>
</dbReference>
<dbReference type="GO" id="GO:0007186">
    <property type="term" value="P:G protein-coupled receptor signaling pathway"/>
    <property type="evidence" value="ECO:0000250"/>
    <property type="project" value="UniProtKB"/>
</dbReference>
<dbReference type="FunFam" id="1.25.10.10:FF:000447">
    <property type="entry name" value="RIC8 guanine nucleotide exchange factor A"/>
    <property type="match status" value="1"/>
</dbReference>
<dbReference type="Gene3D" id="1.25.10.10">
    <property type="entry name" value="Leucine-rich Repeat Variant"/>
    <property type="match status" value="1"/>
</dbReference>
<dbReference type="InterPro" id="IPR011989">
    <property type="entry name" value="ARM-like"/>
</dbReference>
<dbReference type="InterPro" id="IPR016024">
    <property type="entry name" value="ARM-type_fold"/>
</dbReference>
<dbReference type="InterPro" id="IPR008376">
    <property type="entry name" value="Chaperone_Ric-8_A/B"/>
</dbReference>
<dbReference type="InterPro" id="IPR019318">
    <property type="entry name" value="Gua_nucleotide_exch_fac_Ric8"/>
</dbReference>
<dbReference type="PANTHER" id="PTHR12425">
    <property type="entry name" value="SYNEMBRYN"/>
    <property type="match status" value="1"/>
</dbReference>
<dbReference type="PANTHER" id="PTHR12425:SF4">
    <property type="entry name" value="SYNEMBRYN-A"/>
    <property type="match status" value="1"/>
</dbReference>
<dbReference type="Pfam" id="PF10165">
    <property type="entry name" value="Ric8"/>
    <property type="match status" value="1"/>
</dbReference>
<dbReference type="PRINTS" id="PR01802">
    <property type="entry name" value="SYNEMBRYN"/>
</dbReference>
<dbReference type="SUPFAM" id="SSF48371">
    <property type="entry name" value="ARM repeat"/>
    <property type="match status" value="1"/>
</dbReference>